<protein>
    <recommendedName>
        <fullName evidence="1">Hemagglutinin</fullName>
    </recommendedName>
    <component>
        <recommendedName>
            <fullName evidence="1">Hemagglutinin HA1 chain</fullName>
        </recommendedName>
    </component>
    <component>
        <recommendedName>
            <fullName evidence="1">Hemagglutinin HA2 chain</fullName>
        </recommendedName>
    </component>
</protein>
<feature type="signal peptide" evidence="1">
    <location>
        <begin position="1"/>
        <end position="16"/>
    </location>
</feature>
<feature type="chain" id="PRO_0000440488" description="Hemagglutinin" evidence="1">
    <location>
        <begin position="17"/>
        <end position="564"/>
    </location>
</feature>
<feature type="chain" id="PRO_0000039050" description="Hemagglutinin HA1 chain">
    <location>
        <begin position="17"/>
        <end position="342"/>
    </location>
</feature>
<feature type="chain" id="PRO_0000039051" description="Hemagglutinin HA2 chain" evidence="1">
    <location>
        <begin position="344"/>
        <end position="564"/>
    </location>
</feature>
<feature type="topological domain" description="Extracellular" evidence="1">
    <location>
        <begin position="17"/>
        <end position="527"/>
    </location>
</feature>
<feature type="transmembrane region" description="Helical" evidence="1">
    <location>
        <begin position="528"/>
        <end position="548"/>
    </location>
</feature>
<feature type="topological domain" description="Cytoplasmic" evidence="1">
    <location>
        <begin position="549"/>
        <end position="564"/>
    </location>
</feature>
<feature type="site" description="Cleavage; by host" evidence="1">
    <location>
        <begin position="343"/>
        <end position="344"/>
    </location>
</feature>
<feature type="lipid moiety-binding region" description="S-palmitoyl cysteine; by host" evidence="1">
    <location>
        <position position="553"/>
    </location>
</feature>
<feature type="lipid moiety-binding region" description="S-palmitoyl cysteine; by host" evidence="1">
    <location>
        <position position="560"/>
    </location>
</feature>
<feature type="lipid moiety-binding region" description="S-palmitoyl cysteine; by host" evidence="1">
    <location>
        <position position="563"/>
    </location>
</feature>
<feature type="glycosylation site" description="N-linked (GlcNAc...) asparagine; by host" evidence="1">
    <location>
        <position position="18"/>
    </location>
</feature>
<feature type="glycosylation site" description="N-linked (GlcNAc...) asparagine; by host" evidence="1">
    <location>
        <position position="34"/>
    </location>
</feature>
<feature type="glycosylation site" description="N-linked (GlcNAc...) asparagine; by host" evidence="1">
    <location>
        <position position="178"/>
    </location>
</feature>
<feature type="glycosylation site" description="N-linked (GlcNAc...) asparagine; by host" evidence="1">
    <location>
        <position position="310"/>
    </location>
</feature>
<feature type="glycosylation site" description="N-linked (GlcNAc...) asparagine; by host" evidence="1">
    <location>
        <position position="497"/>
    </location>
</feature>
<feature type="disulfide bond" description="Interchain (between HA1 and HA2 chains)" evidence="1">
    <location>
        <begin position="26"/>
        <end position="480"/>
    </location>
</feature>
<feature type="disulfide bond" evidence="1">
    <location>
        <begin position="64"/>
        <end position="291"/>
    </location>
</feature>
<feature type="disulfide bond" evidence="1">
    <location>
        <begin position="76"/>
        <end position="88"/>
    </location>
</feature>
<feature type="disulfide bond" evidence="1">
    <location>
        <begin position="109"/>
        <end position="151"/>
    </location>
</feature>
<feature type="disulfide bond" evidence="1">
    <location>
        <begin position="295"/>
        <end position="319"/>
    </location>
</feature>
<feature type="disulfide bond" evidence="1">
    <location>
        <begin position="487"/>
        <end position="491"/>
    </location>
</feature>
<feature type="sequence conflict" description="In Ref. 1; AAA43223." evidence="2" ref="1">
    <original>S</original>
    <variation>T</variation>
    <location>
        <position position="303"/>
    </location>
</feature>
<feature type="sequence conflict" description="In Ref. 1; AAA43223." evidence="2" ref="1">
    <original>I</original>
    <variation>T</variation>
    <location>
        <position position="391"/>
    </location>
</feature>
<feature type="sequence conflict" description="In Ref. 1; AAA43223." evidence="2" ref="1">
    <original>V</original>
    <variation>D</variation>
    <location>
        <position position="519"/>
    </location>
</feature>
<sequence length="564" mass="63231">MLSITILFLLIAEGSSQNYTGNPVICLGHHAVPNGTMVKTLTDDQVEVVTAQELVESQHLPELCPSPLRLVDGQTCDIVNGALGSPGCDHLNGAEWDVFIERPTAVDTCYPFDVPDYQSLRSILANNGKFEFIAEEFQWNTVKQNGKSGACKRANVNDFFNRLNWLTKSDGNAYPLQNLTKVNNGDYARLYIWGVHHPSTDTEQTNLYENNPGRVTVSTQTSQTSVVPNIGSRPWVRGQSGRISFYWTIVEPGDLIVFNTIGNLIAPRGHYKLNSQKKSTILNTAVPIGSCVSKCHTDRGSISTTKPFQNISRISIGDCPKYVKQGSLKLATGMRNIPEKATRGLFGAIAGFIENGWQGLIDGWYGFRHQNAEGTGTAADLKSTQAAIDQINGKLNRLIEKTNEKYHQIEKEFEQVEGRIQDLEKYVEDTKIDLWSYNAELLVALENQHTIDVTDSEMNKLFERVRRQLRENAEDKGNGCFEIFHQCDNSCIESIRNGTYDHDIYRDEAINNRFQIQGVKLTQGYKDIILWISFSISCFLLVALLLAFILWACQNGNIRCQICI</sequence>
<name>HEMA_I80A8</name>
<dbReference type="EMBL" id="M25290">
    <property type="protein sequence ID" value="AAA43223.1"/>
    <property type="molecule type" value="Genomic_RNA"/>
</dbReference>
<dbReference type="EMBL" id="CY014751">
    <property type="protein sequence ID" value="ABI84643.1"/>
    <property type="molecule type" value="Genomic_RNA"/>
</dbReference>
<dbReference type="SMR" id="P19702"/>
<dbReference type="GlyCosmos" id="P19702">
    <property type="glycosylation" value="5 sites, No reported glycans"/>
</dbReference>
<dbReference type="Proteomes" id="UP000008579">
    <property type="component" value="Genome"/>
</dbReference>
<dbReference type="GO" id="GO:0020002">
    <property type="term" value="C:host cell plasma membrane"/>
    <property type="evidence" value="ECO:0007669"/>
    <property type="project" value="UniProtKB-SubCell"/>
</dbReference>
<dbReference type="GO" id="GO:0016020">
    <property type="term" value="C:membrane"/>
    <property type="evidence" value="ECO:0007669"/>
    <property type="project" value="UniProtKB-UniRule"/>
</dbReference>
<dbReference type="GO" id="GO:0019031">
    <property type="term" value="C:viral envelope"/>
    <property type="evidence" value="ECO:0007669"/>
    <property type="project" value="UniProtKB-UniRule"/>
</dbReference>
<dbReference type="GO" id="GO:0055036">
    <property type="term" value="C:virion membrane"/>
    <property type="evidence" value="ECO:0007669"/>
    <property type="project" value="UniProtKB-SubCell"/>
</dbReference>
<dbReference type="GO" id="GO:0046789">
    <property type="term" value="F:host cell surface receptor binding"/>
    <property type="evidence" value="ECO:0007669"/>
    <property type="project" value="UniProtKB-UniRule"/>
</dbReference>
<dbReference type="GO" id="GO:0075512">
    <property type="term" value="P:clathrin-dependent endocytosis of virus by host cell"/>
    <property type="evidence" value="ECO:0007669"/>
    <property type="project" value="UniProtKB-UniRule"/>
</dbReference>
<dbReference type="GO" id="GO:0039654">
    <property type="term" value="P:fusion of virus membrane with host endosome membrane"/>
    <property type="evidence" value="ECO:0007669"/>
    <property type="project" value="UniProtKB-UniRule"/>
</dbReference>
<dbReference type="GO" id="GO:0019064">
    <property type="term" value="P:fusion of virus membrane with host plasma membrane"/>
    <property type="evidence" value="ECO:0007669"/>
    <property type="project" value="InterPro"/>
</dbReference>
<dbReference type="GO" id="GO:0046761">
    <property type="term" value="P:viral budding from plasma membrane"/>
    <property type="evidence" value="ECO:0007669"/>
    <property type="project" value="UniProtKB-UniRule"/>
</dbReference>
<dbReference type="GO" id="GO:0019062">
    <property type="term" value="P:virion attachment to host cell"/>
    <property type="evidence" value="ECO:0007669"/>
    <property type="project" value="UniProtKB-KW"/>
</dbReference>
<dbReference type="Gene3D" id="3.90.20.10">
    <property type="match status" value="1"/>
</dbReference>
<dbReference type="Gene3D" id="3.90.209.20">
    <property type="match status" value="1"/>
</dbReference>
<dbReference type="HAMAP" id="MF_04072">
    <property type="entry name" value="INFV_HEMA"/>
    <property type="match status" value="1"/>
</dbReference>
<dbReference type="InterPro" id="IPR008980">
    <property type="entry name" value="Capsid_hemagglutn"/>
</dbReference>
<dbReference type="InterPro" id="IPR013828">
    <property type="entry name" value="Hemagglutn_HA1_a/b_dom_sf"/>
</dbReference>
<dbReference type="InterPro" id="IPR000149">
    <property type="entry name" value="Hemagglutn_influenz_A"/>
</dbReference>
<dbReference type="InterPro" id="IPR001364">
    <property type="entry name" value="Hemagglutn_influenz_A/B"/>
</dbReference>
<dbReference type="Pfam" id="PF00509">
    <property type="entry name" value="Hemagglutinin"/>
    <property type="match status" value="1"/>
</dbReference>
<dbReference type="PRINTS" id="PR00330">
    <property type="entry name" value="HEMAGGLUTN1"/>
</dbReference>
<dbReference type="PRINTS" id="PR00329">
    <property type="entry name" value="HEMAGGLUTN12"/>
</dbReference>
<dbReference type="SUPFAM" id="SSF58064">
    <property type="entry name" value="Influenza hemagglutinin (stalk)"/>
    <property type="match status" value="1"/>
</dbReference>
<dbReference type="SUPFAM" id="SSF49818">
    <property type="entry name" value="Viral protein domain"/>
    <property type="match status" value="1"/>
</dbReference>
<comment type="function">
    <text>Binds to sialic acid-containing receptors on the cell surface, bringing about the attachment of the virus particle to the cell. This attachment induces virion internalization of about two third of the virus particles through clathrin-dependent endocytosis and about one third through a clathrin- and caveolin-independent pathway. Plays a major role in the determination of host range restriction and virulence. Class I viral fusion protein. Responsible for penetration of the virus into the cell cytoplasm by mediating the fusion of the membrane of the endocytosed virus particle with the endosomal membrane. Low pH in endosomes induces an irreversible conformational change in HA2, releasing the fusion hydrophobic peptide. Several trimers are required to form a competent fusion pore.</text>
</comment>
<comment type="function">
    <text evidence="1">Binds to sialic acid-containing receptors on the cell surface, bringing about the attachment of the virus particle to the cell. This attachment induces virion internalization either through clathrin-dependent endocytosis or through clathrin- and caveolin-independent pathway. Plays a major role in the determination of host range restriction and virulence. Class I viral fusion protein. Responsible for penetration of the virus into the cell cytoplasm by mediating the fusion of the membrane of the endocytosed virus particle with the endosomal membrane. Low pH in endosomes induces an irreversible conformational change in HA2, releasing the fusion hydrophobic peptide. Several trimers are required to form a competent fusion pore.</text>
</comment>
<comment type="subunit">
    <text evidence="1">Homotrimer of disulfide-linked HA1-HA2.</text>
</comment>
<comment type="subcellular location">
    <subcellularLocation>
        <location evidence="1">Virion membrane</location>
        <topology evidence="1">Single-pass type I membrane protein</topology>
    </subcellularLocation>
    <subcellularLocation>
        <location evidence="1">Host apical cell membrane</location>
        <topology evidence="1">Single-pass type I membrane protein</topology>
    </subcellularLocation>
    <text evidence="1">Targeted to the apical plasma membrane in epithelial polarized cells through a signal present in the transmembrane domain. Associated with glycosphingolipid- and cholesterol-enriched detergent-resistant lipid rafts.</text>
</comment>
<comment type="PTM">
    <text evidence="1">Palmitoylated.</text>
</comment>
<comment type="PTM">
    <text evidence="1">In natural infection, inactive HA is matured into HA1 and HA2 outside the cell by one or more trypsin-like, arginine-specific endoprotease secreted by the bronchial epithelial cells. One identified protease that may be involved in this process is secreted in lungs by club cells.</text>
</comment>
<comment type="miscellaneous">
    <text>Major glycoprotein, comprises over 80% of the envelope proteins present in virus particle.</text>
</comment>
<comment type="miscellaneous">
    <text>The extent of infection into host organism is determined by HA. Influenza viruses bud from the apical surface of polarized epithelial cells (e.g. bronchial epithelial cells) into lumen of lungs and are therefore usually pneumotropic. The reason is that HA is cleaved by tryptase clara which is restricted to lungs. However, HAs of H5 and H7 pantropic avian viruses subtypes can be cleaved by furin and subtilisin-type enzymes, allowing the virus to grow in other organs than lungs.</text>
</comment>
<comment type="miscellaneous">
    <text evidence="2">The influenza A genome consist of 8 RNA segments. Genetic variation of hemagglutinin and/or neuraminidase genes results in the emergence of new influenza strains. The mechanism of variation can be the result of point mutations or the result of genetic reassortment between segments of two different strains.</text>
</comment>
<comment type="similarity">
    <text evidence="1">Belongs to the influenza viruses hemagglutinin family.</text>
</comment>
<organismHost>
    <name type="scientific">Aves</name>
    <dbReference type="NCBI Taxonomy" id="8782"/>
</organismHost>
<keyword id="KW-1167">Clathrin- and caveolin-independent endocytosis of virus by host</keyword>
<keyword id="KW-1165">Clathrin-mediated endocytosis of virus by host</keyword>
<keyword id="KW-1015">Disulfide bond</keyword>
<keyword id="KW-1170">Fusion of virus membrane with host endosomal membrane</keyword>
<keyword id="KW-1168">Fusion of virus membrane with host membrane</keyword>
<keyword id="KW-0325">Glycoprotein</keyword>
<keyword id="KW-0348">Hemagglutinin</keyword>
<keyword id="KW-1032">Host cell membrane</keyword>
<keyword id="KW-1043">Host membrane</keyword>
<keyword id="KW-0945">Host-virus interaction</keyword>
<keyword id="KW-0449">Lipoprotein</keyword>
<keyword id="KW-0472">Membrane</keyword>
<keyword id="KW-0564">Palmitate</keyword>
<keyword id="KW-0732">Signal</keyword>
<keyword id="KW-0812">Transmembrane</keyword>
<keyword id="KW-1133">Transmembrane helix</keyword>
<keyword id="KW-1161">Viral attachment to host cell</keyword>
<keyword id="KW-0261">Viral envelope protein</keyword>
<keyword id="KW-1162">Viral penetration into host cytoplasm</keyword>
<keyword id="KW-0946">Virion</keyword>
<keyword id="KW-1164">Virus endocytosis by host</keyword>
<keyword id="KW-1160">Virus entry into host cell</keyword>
<reference key="1">
    <citation type="journal article" date="1989" name="Virology">
        <title>Distinct lineages of influenza virus H4 hemagglutinin genes in different regions of the world.</title>
        <authorList>
            <person name="Donis R.O."/>
            <person name="Bean W.J."/>
            <person name="Kawaoka Y."/>
            <person name="Webster R.G."/>
        </authorList>
    </citation>
    <scope>NUCLEOTIDE SEQUENCE [GENOMIC RNA]</scope>
</reference>
<reference key="2">
    <citation type="journal article" date="2006" name="Science">
        <title>Large-scale sequence analysis of avian influenza isolates.</title>
        <authorList>
            <person name="Obenauer J.C."/>
            <person name="Denson J."/>
            <person name="Mehta P.K."/>
            <person name="Su X."/>
            <person name="Mukatira S."/>
            <person name="Finkelstein D.B."/>
            <person name="Xu X."/>
            <person name="Wang J."/>
            <person name="Ma J."/>
            <person name="Fan Y."/>
            <person name="Rakestraw K.M."/>
            <person name="Webster R.G."/>
            <person name="Hoffmann E."/>
            <person name="Krauss S."/>
            <person name="Zheng J."/>
            <person name="Zhang Z."/>
            <person name="Naeve C.W."/>
        </authorList>
    </citation>
    <scope>NUCLEOTIDE SEQUENCE [GENOMIC RNA]</scope>
</reference>
<accession>P19702</accession>
<accession>Q0A3T9</accession>
<proteinExistence type="inferred from homology"/>
<organism>
    <name type="scientific">Influenza A virus (strain A/Turkey/Minnesota/833/1980 H4N2)</name>
    <dbReference type="NCBI Taxonomy" id="383603"/>
    <lineage>
        <taxon>Viruses</taxon>
        <taxon>Riboviria</taxon>
        <taxon>Orthornavirae</taxon>
        <taxon>Negarnaviricota</taxon>
        <taxon>Polyploviricotina</taxon>
        <taxon>Insthoviricetes</taxon>
        <taxon>Articulavirales</taxon>
        <taxon>Orthomyxoviridae</taxon>
        <taxon>Alphainfluenzavirus</taxon>
        <taxon>Alphainfluenzavirus influenzae</taxon>
        <taxon>Influenza A virus</taxon>
    </lineage>
</organism>
<gene>
    <name evidence="1" type="primary">HA</name>
</gene>
<evidence type="ECO:0000255" key="1">
    <source>
        <dbReference type="HAMAP-Rule" id="MF_04072"/>
    </source>
</evidence>
<evidence type="ECO:0000305" key="2"/>